<comment type="function">
    <text evidence="1">Catalyzes the enolization of 2,3-diketo-5-methylthiopentyl-1-phosphate (DK-MTP-1-P) into 2-hydroxy-3-keto-5-methylthiopentenyl-1-phosphate (HK-MTPenyl-1-P).</text>
</comment>
<comment type="catalytic activity">
    <reaction evidence="1">
        <text>5-methylsulfanyl-2,3-dioxopentyl phosphate = 2-hydroxy-5-methylsulfanyl-3-oxopent-1-enyl phosphate</text>
        <dbReference type="Rhea" id="RHEA:18769"/>
        <dbReference type="ChEBI" id="CHEBI:58828"/>
        <dbReference type="ChEBI" id="CHEBI:59505"/>
        <dbReference type="EC" id="5.3.2.5"/>
    </reaction>
</comment>
<comment type="cofactor">
    <cofactor evidence="1">
        <name>Mg(2+)</name>
        <dbReference type="ChEBI" id="CHEBI:18420"/>
    </cofactor>
    <text evidence="1">Binds 1 Mg(2+) ion per subunit.</text>
</comment>
<comment type="pathway">
    <text evidence="1">Amino-acid biosynthesis; L-methionine biosynthesis via salvage pathway; L-methionine from S-methyl-5-thio-alpha-D-ribose 1-phosphate: step 3/6.</text>
</comment>
<comment type="subunit">
    <text evidence="1">Homodimer.</text>
</comment>
<comment type="miscellaneous">
    <text evidence="1">Has no RuBP-carboxylation activity.</text>
</comment>
<comment type="similarity">
    <text evidence="1">Belongs to the RuBisCO large chain family. Type IV subfamily.</text>
</comment>
<proteinExistence type="inferred from homology"/>
<feature type="chain" id="PRO_0000357289" description="2,3-diketo-5-methylthiopentyl-1-phosphate enolase">
    <location>
        <begin position="1"/>
        <end position="396"/>
    </location>
</feature>
<feature type="active site" description="Proton acceptor" evidence="1">
    <location>
        <position position="85"/>
    </location>
</feature>
<feature type="binding site" evidence="1">
    <location>
        <position position="134"/>
    </location>
    <ligand>
        <name>substrate</name>
    </ligand>
</feature>
<feature type="binding site" evidence="1">
    <location>
        <begin position="160"/>
        <end position="163"/>
    </location>
    <ligand>
        <name>substrate</name>
    </ligand>
</feature>
<feature type="binding site" description="via carbamate group" evidence="1">
    <location>
        <position position="160"/>
    </location>
    <ligand>
        <name>Mg(2+)</name>
        <dbReference type="ChEBI" id="CHEBI:18420"/>
    </ligand>
</feature>
<feature type="binding site" evidence="1">
    <location>
        <position position="162"/>
    </location>
    <ligand>
        <name>Mg(2+)</name>
        <dbReference type="ChEBI" id="CHEBI:18420"/>
    </ligand>
</feature>
<feature type="binding site" evidence="1">
    <location>
        <position position="163"/>
    </location>
    <ligand>
        <name>Mg(2+)</name>
        <dbReference type="ChEBI" id="CHEBI:18420"/>
    </ligand>
</feature>
<feature type="binding site" evidence="1">
    <location>
        <position position="251"/>
    </location>
    <ligand>
        <name>substrate</name>
    </ligand>
</feature>
<feature type="binding site" evidence="1">
    <location>
        <position position="323"/>
    </location>
    <ligand>
        <name>substrate</name>
    </ligand>
</feature>
<feature type="binding site" evidence="1">
    <location>
        <begin position="345"/>
        <end position="346"/>
    </location>
    <ligand>
        <name>substrate</name>
    </ligand>
</feature>
<feature type="modified residue" description="N6-carboxylysine" evidence="1">
    <location>
        <position position="160"/>
    </location>
</feature>
<reference key="1">
    <citation type="submission" date="2008-04" db="EMBL/GenBank/DDBJ databases">
        <title>Complete sequence of chromosome of Exiguobacterium sibiricum 255-15.</title>
        <authorList>
            <consortium name="US DOE Joint Genome Institute"/>
            <person name="Copeland A."/>
            <person name="Lucas S."/>
            <person name="Lapidus A."/>
            <person name="Glavina del Rio T."/>
            <person name="Dalin E."/>
            <person name="Tice H."/>
            <person name="Bruce D."/>
            <person name="Goodwin L."/>
            <person name="Pitluck S."/>
            <person name="Kiss H."/>
            <person name="Chertkov O."/>
            <person name="Monk C."/>
            <person name="Brettin T."/>
            <person name="Detter J.C."/>
            <person name="Han C."/>
            <person name="Kuske C.R."/>
            <person name="Schmutz J."/>
            <person name="Larimer F."/>
            <person name="Land M."/>
            <person name="Hauser L."/>
            <person name="Kyrpides N."/>
            <person name="Mikhailova N."/>
            <person name="Vishnivetskaya T."/>
            <person name="Rodrigues D.F."/>
            <person name="Gilichinsky D."/>
            <person name="Tiedje J."/>
            <person name="Richardson P."/>
        </authorList>
    </citation>
    <scope>NUCLEOTIDE SEQUENCE [LARGE SCALE GENOMIC DNA]</scope>
    <source>
        <strain>DSM 17290 / CCUG 55495 / CIP 109462 / JCM 13490 / 255-15</strain>
    </source>
</reference>
<sequence length="396" mass="42430">MTYITATYQLGTTDQLPKRAEQIALGLTVGSWTDLNHLEQQQLESFKGQVVHTEEHDGKGYITIRYPEHNVSRDFSAILTTVFGKLSLDGQIKLTDLQLPASFTTDFPGAKFGIEGVRQLIQVHDRPLLMSIFKGVIGRDLTFLREQLEAQLAGGIDLVKDDEILYDNPLTPALDRARIGRDVLNAHYEKTGKRALYAITLSGSVFGLKDQTKRLIEAGATAFLLNTFTYGLDVLRELAADPDISVPIFNHPALSGALIASPEYGIAAPVLLGTLPRLAGADLTLFPSPYGNVALAKDLARGIAVEATRIGETKTILPVPSAGIHPGLVAQLVHDFGTDSVINAGGGVHGHPQGAAAGVLAFRQALDAALAGESLTSAATRQEELRVALDAWGITK</sequence>
<protein>
    <recommendedName>
        <fullName evidence="1">2,3-diketo-5-methylthiopentyl-1-phosphate enolase</fullName>
        <shortName evidence="1">DK-MTP-1-P enolase</shortName>
        <ecNumber evidence="1">5.3.2.5</ecNumber>
    </recommendedName>
    <alternativeName>
        <fullName evidence="1">RuBisCO-like protein</fullName>
        <shortName evidence="1">RLP</shortName>
    </alternativeName>
</protein>
<name>MTNW_EXIS2</name>
<organism>
    <name type="scientific">Exiguobacterium sibiricum (strain DSM 17290 / CCUG 55495 / CIP 109462 / JCM 13490 / 255-15)</name>
    <dbReference type="NCBI Taxonomy" id="262543"/>
    <lineage>
        <taxon>Bacteria</taxon>
        <taxon>Bacillati</taxon>
        <taxon>Bacillota</taxon>
        <taxon>Bacilli</taxon>
        <taxon>Bacillales</taxon>
        <taxon>Bacillales Family XII. Incertae Sedis</taxon>
        <taxon>Exiguobacterium</taxon>
    </lineage>
</organism>
<gene>
    <name evidence="1" type="primary">mtnW</name>
    <name type="ordered locus">Exig_0430</name>
</gene>
<keyword id="KW-0028">Amino-acid biosynthesis</keyword>
<keyword id="KW-0413">Isomerase</keyword>
<keyword id="KW-0460">Magnesium</keyword>
<keyword id="KW-0479">Metal-binding</keyword>
<keyword id="KW-0486">Methionine biosynthesis</keyword>
<keyword id="KW-1185">Reference proteome</keyword>
<accession>B1YIY2</accession>
<dbReference type="EC" id="5.3.2.5" evidence="1"/>
<dbReference type="EMBL" id="CP001022">
    <property type="protein sequence ID" value="ACB59912.1"/>
    <property type="molecule type" value="Genomic_DNA"/>
</dbReference>
<dbReference type="RefSeq" id="WP_012369336.1">
    <property type="nucleotide sequence ID" value="NC_010556.1"/>
</dbReference>
<dbReference type="SMR" id="B1YIY2"/>
<dbReference type="STRING" id="262543.Exig_0430"/>
<dbReference type="KEGG" id="esi:Exig_0430"/>
<dbReference type="eggNOG" id="COG1850">
    <property type="taxonomic scope" value="Bacteria"/>
</dbReference>
<dbReference type="HOGENOM" id="CLU_031450_3_1_9"/>
<dbReference type="OrthoDB" id="9770811at2"/>
<dbReference type="UniPathway" id="UPA00904">
    <property type="reaction ID" value="UER00876"/>
</dbReference>
<dbReference type="Proteomes" id="UP000001681">
    <property type="component" value="Chromosome"/>
</dbReference>
<dbReference type="GO" id="GO:0043715">
    <property type="term" value="F:2,3-diketo-5-methylthiopentyl-1-phosphate enolase activity"/>
    <property type="evidence" value="ECO:0007669"/>
    <property type="project" value="UniProtKB-UniRule"/>
</dbReference>
<dbReference type="GO" id="GO:0000287">
    <property type="term" value="F:magnesium ion binding"/>
    <property type="evidence" value="ECO:0007669"/>
    <property type="project" value="UniProtKB-UniRule"/>
</dbReference>
<dbReference type="GO" id="GO:0016984">
    <property type="term" value="F:ribulose-bisphosphate carboxylase activity"/>
    <property type="evidence" value="ECO:0007669"/>
    <property type="project" value="InterPro"/>
</dbReference>
<dbReference type="GO" id="GO:0015977">
    <property type="term" value="P:carbon fixation"/>
    <property type="evidence" value="ECO:0007669"/>
    <property type="project" value="InterPro"/>
</dbReference>
<dbReference type="GO" id="GO:0019509">
    <property type="term" value="P:L-methionine salvage from methylthioadenosine"/>
    <property type="evidence" value="ECO:0007669"/>
    <property type="project" value="UniProtKB-UniRule"/>
</dbReference>
<dbReference type="CDD" id="cd08209">
    <property type="entry name" value="RLP_DK-MTP-1-P-enolase"/>
    <property type="match status" value="1"/>
</dbReference>
<dbReference type="Gene3D" id="3.20.20.110">
    <property type="entry name" value="Ribulose bisphosphate carboxylase, large subunit, C-terminal domain"/>
    <property type="match status" value="1"/>
</dbReference>
<dbReference type="Gene3D" id="3.30.70.150">
    <property type="entry name" value="RuBisCO large subunit, N-terminal domain"/>
    <property type="match status" value="1"/>
</dbReference>
<dbReference type="HAMAP" id="MF_01679">
    <property type="entry name" value="Salvage_MtnW"/>
    <property type="match status" value="1"/>
</dbReference>
<dbReference type="InterPro" id="IPR017717">
    <property type="entry name" value="Diketo-Methiopentyl-P_enolase"/>
</dbReference>
<dbReference type="InterPro" id="IPR033966">
    <property type="entry name" value="RuBisCO"/>
</dbReference>
<dbReference type="InterPro" id="IPR000685">
    <property type="entry name" value="RuBisCO_lsu_C"/>
</dbReference>
<dbReference type="InterPro" id="IPR036376">
    <property type="entry name" value="RuBisCO_lsu_C_sf"/>
</dbReference>
<dbReference type="InterPro" id="IPR017443">
    <property type="entry name" value="RuBisCO_lsu_fd_N"/>
</dbReference>
<dbReference type="InterPro" id="IPR036422">
    <property type="entry name" value="RuBisCO_lsu_N_sf"/>
</dbReference>
<dbReference type="NCBIfam" id="NF007095">
    <property type="entry name" value="PRK09549.1"/>
    <property type="match status" value="1"/>
</dbReference>
<dbReference type="PANTHER" id="PTHR42704">
    <property type="entry name" value="RIBULOSE BISPHOSPHATE CARBOXYLASE"/>
    <property type="match status" value="1"/>
</dbReference>
<dbReference type="PANTHER" id="PTHR42704:SF17">
    <property type="entry name" value="RIBULOSE BISPHOSPHATE CARBOXYLASE LARGE CHAIN"/>
    <property type="match status" value="1"/>
</dbReference>
<dbReference type="Pfam" id="PF00016">
    <property type="entry name" value="RuBisCO_large"/>
    <property type="match status" value="1"/>
</dbReference>
<dbReference type="Pfam" id="PF02788">
    <property type="entry name" value="RuBisCO_large_N"/>
    <property type="match status" value="1"/>
</dbReference>
<dbReference type="SFLD" id="SFLDF00157">
    <property type="entry name" value="2_3-diketo-5-methylthiopentyl"/>
    <property type="match status" value="1"/>
</dbReference>
<dbReference type="SFLD" id="SFLDS00014">
    <property type="entry name" value="RuBisCO"/>
    <property type="match status" value="1"/>
</dbReference>
<dbReference type="SUPFAM" id="SSF51649">
    <property type="entry name" value="RuBisCo, C-terminal domain"/>
    <property type="match status" value="1"/>
</dbReference>
<dbReference type="SUPFAM" id="SSF54966">
    <property type="entry name" value="RuBisCO, large subunit, small (N-terminal) domain"/>
    <property type="match status" value="1"/>
</dbReference>
<evidence type="ECO:0000255" key="1">
    <source>
        <dbReference type="HAMAP-Rule" id="MF_01679"/>
    </source>
</evidence>